<reference evidence="8" key="1">
    <citation type="journal article" date="2015" name="J. Insect Sci.">
        <title>Identification and Characterization of 30 K Protein Genes Found in Bombyx mori (Lepidoptera: Bombycidae) Transcriptome.</title>
        <authorList>
            <person name="Shi X.F."/>
            <person name="Li Y.N."/>
            <person name="Yi Y.Z."/>
            <person name="Xiao X.G."/>
            <person name="Zhang Z.F."/>
        </authorList>
    </citation>
    <scope>NUCLEOTIDE SEQUENCE [MRNA]</scope>
    <scope>SUBCELLULAR LOCATION</scope>
    <scope>TISSUE SPECIFICITY</scope>
    <scope>DEVELOPMENTAL STAGE</scope>
    <scope>IDENTIFICATION BY MASS SPECTROMETRY</scope>
</reference>
<reference key="2">
    <citation type="journal article" date="1991" name="Biochim. Biophys. Acta">
        <title>Complete nucleotide sequences of major plasma protein genes of Bombyx mori.</title>
        <authorList>
            <person name="Mori S."/>
            <person name="Izumi S."/>
            <person name="Tomino S."/>
        </authorList>
    </citation>
    <scope>NUCLEOTIDE SEQUENCE [GENOMIC DNA]</scope>
    <source>
        <strain>Tokai X Asahi</strain>
        <tissue>Fat body</tissue>
    </source>
</reference>
<reference key="3">
    <citation type="journal article" date="2004" name="Science">
        <title>A draft sequence for the genome of the domesticated silkworm (Bombyx mori).</title>
        <authorList>
            <person name="Xia Q."/>
            <person name="Zhou Z."/>
            <person name="Lu C."/>
            <person name="Cheng D."/>
            <person name="Dai F."/>
            <person name="Li B."/>
            <person name="Zhao P."/>
            <person name="Zha X."/>
            <person name="Cheng T."/>
            <person name="Chai C."/>
            <person name="Pan G."/>
            <person name="Xu J."/>
            <person name="Liu C."/>
            <person name="Lin Y."/>
            <person name="Qian J."/>
            <person name="Hou Y."/>
            <person name="Wu Z."/>
            <person name="Li G."/>
            <person name="Pan M."/>
            <person name="Li C."/>
            <person name="Shen Y."/>
            <person name="Lan X."/>
            <person name="Yuan L."/>
            <person name="Li T."/>
            <person name="Xu H."/>
            <person name="Yang G."/>
            <person name="Wan Y."/>
            <person name="Zhu Y."/>
            <person name="Yu M."/>
            <person name="Shen W."/>
            <person name="Wu D."/>
            <person name="Xiang Z."/>
            <person name="Yu J."/>
            <person name="Wang J."/>
            <person name="Li R."/>
            <person name="Shi J."/>
            <person name="Li H."/>
            <person name="Li G."/>
            <person name="Su J."/>
            <person name="Wang X."/>
            <person name="Li G."/>
            <person name="Zhang Z."/>
            <person name="Wu Q."/>
            <person name="Li J."/>
            <person name="Zhang Q."/>
            <person name="Wei N."/>
            <person name="Xu J."/>
            <person name="Sun H."/>
            <person name="Dong L."/>
            <person name="Liu D."/>
            <person name="Zhao S."/>
            <person name="Zhao X."/>
            <person name="Meng Q."/>
            <person name="Lan F."/>
            <person name="Huang X."/>
            <person name="Li Y."/>
            <person name="Fang L."/>
            <person name="Li C."/>
            <person name="Li D."/>
            <person name="Sun Y."/>
            <person name="Zhang Z."/>
            <person name="Yang Z."/>
            <person name="Huang Y."/>
            <person name="Xi Y."/>
            <person name="Qi Q."/>
            <person name="He D."/>
            <person name="Huang H."/>
            <person name="Zhang X."/>
            <person name="Wang Z."/>
            <person name="Li W."/>
            <person name="Cao Y."/>
            <person name="Yu Y."/>
            <person name="Yu H."/>
            <person name="Li J."/>
            <person name="Ye J."/>
            <person name="Chen H."/>
            <person name="Zhou Y."/>
            <person name="Liu B."/>
            <person name="Wang J."/>
            <person name="Ye J."/>
            <person name="Ji H."/>
            <person name="Li S."/>
            <person name="Ni P."/>
            <person name="Zhang J."/>
            <person name="Zhang Y."/>
            <person name="Zheng H."/>
            <person name="Mao B."/>
            <person name="Wang W."/>
            <person name="Ye C."/>
            <person name="Li S."/>
            <person name="Wang J."/>
            <person name="Wong G.K.-S."/>
            <person name="Yang H."/>
        </authorList>
    </citation>
    <scope>NUCLEOTIDE SEQUENCE [LARGE SCALE GENOMIC DNA]</scope>
    <source>
        <strain>p50T</strain>
    </source>
</reference>
<reference evidence="9 10" key="4">
    <citation type="journal article" date="2013" name="PLoS ONE">
        <title>Two crystal structures of Bombyx mori lipoprotein 3 - structural characterization of a new 30-kDa lipoprotein family member.</title>
        <authorList>
            <person name="Pietrzyk A.J."/>
            <person name="Bujacz A."/>
            <person name="Mueller-Dieckmann J."/>
            <person name="Lochynska M."/>
            <person name="Jaskolski M."/>
            <person name="Bujacz G."/>
        </authorList>
    </citation>
    <scope>PROTEIN SEQUENCE OF 18-27</scope>
    <scope>X-RAY CRYSTALLOGRAPHY (2.10 ANGSTROMS) OF 18-256</scope>
    <scope>SUBCELLULAR LOCATION</scope>
    <scope>TISSUE SPECIFICITY</scope>
</reference>
<reference evidence="7" key="5">
    <citation type="journal article" date="2007" name="Insect Sci.">
        <title>Analysis of the structure and expression of the 30K protein genes in silkworm, Bombyx mori.</title>
        <authorList>
            <person name="Sun Q."/>
            <person name="Zhao P."/>
            <person name="Lin Y."/>
            <person name="Hou Y."/>
            <person name="Xia Q.-Y."/>
            <person name="Xiang Z.-H."/>
        </authorList>
    </citation>
    <scope>NOMENCLATURE</scope>
    <scope>DEVELOPMENTAL STAGE</scope>
</reference>
<feature type="signal peptide" evidence="1">
    <location>
        <begin position="1"/>
        <end position="17"/>
    </location>
</feature>
<feature type="chain" id="PRO_0000021572" description="Low molecular mass lipoprotein 3">
    <location>
        <begin position="18"/>
        <end position="256"/>
    </location>
</feature>
<feature type="sequence conflict" description="In Ref. 2; CAA38533." evidence="7" ref="2">
    <original>A</original>
    <variation>R</variation>
    <location>
        <position position="132"/>
    </location>
</feature>
<feature type="helix" evidence="11">
    <location>
        <begin position="19"/>
        <end position="21"/>
    </location>
</feature>
<feature type="helix" evidence="12">
    <location>
        <begin position="24"/>
        <end position="36"/>
    </location>
</feature>
<feature type="helix" evidence="12">
    <location>
        <begin position="40"/>
        <end position="52"/>
    </location>
</feature>
<feature type="helix" evidence="12">
    <location>
        <begin position="56"/>
        <end position="68"/>
    </location>
</feature>
<feature type="helix" evidence="12">
    <location>
        <begin position="73"/>
        <end position="83"/>
    </location>
</feature>
<feature type="helix" evidence="12">
    <location>
        <begin position="87"/>
        <end position="93"/>
    </location>
</feature>
<feature type="helix" evidence="12">
    <location>
        <begin position="96"/>
        <end position="102"/>
    </location>
</feature>
<feature type="strand" evidence="12">
    <location>
        <begin position="107"/>
        <end position="111"/>
    </location>
</feature>
<feature type="turn" evidence="12">
    <location>
        <begin position="112"/>
        <end position="115"/>
    </location>
</feature>
<feature type="strand" evidence="12">
    <location>
        <begin position="116"/>
        <end position="120"/>
    </location>
</feature>
<feature type="strand" evidence="12">
    <location>
        <begin position="125"/>
        <end position="128"/>
    </location>
</feature>
<feature type="strand" evidence="12">
    <location>
        <begin position="130"/>
        <end position="137"/>
    </location>
</feature>
<feature type="strand" evidence="12">
    <location>
        <begin position="139"/>
        <end position="141"/>
    </location>
</feature>
<feature type="helix" evidence="12">
    <location>
        <begin position="142"/>
        <end position="144"/>
    </location>
</feature>
<feature type="strand" evidence="12">
    <location>
        <begin position="146"/>
        <end position="153"/>
    </location>
</feature>
<feature type="strand" evidence="12">
    <location>
        <begin position="156"/>
        <end position="163"/>
    </location>
</feature>
<feature type="turn" evidence="12">
    <location>
        <begin position="164"/>
        <end position="167"/>
    </location>
</feature>
<feature type="strand" evidence="12">
    <location>
        <begin position="168"/>
        <end position="176"/>
    </location>
</feature>
<feature type="strand" evidence="12">
    <location>
        <begin position="182"/>
        <end position="188"/>
    </location>
</feature>
<feature type="helix" evidence="12">
    <location>
        <begin position="193"/>
        <end position="195"/>
    </location>
</feature>
<feature type="strand" evidence="12">
    <location>
        <begin position="197"/>
        <end position="204"/>
    </location>
</feature>
<feature type="strand" evidence="12">
    <location>
        <begin position="207"/>
        <end position="214"/>
    </location>
</feature>
<feature type="turn" evidence="12">
    <location>
        <begin position="215"/>
        <end position="217"/>
    </location>
</feature>
<feature type="strand" evidence="12">
    <location>
        <begin position="220"/>
        <end position="223"/>
    </location>
</feature>
<feature type="strand" evidence="12">
    <location>
        <begin position="233"/>
        <end position="238"/>
    </location>
</feature>
<feature type="helix" evidence="12">
    <location>
        <begin position="246"/>
        <end position="249"/>
    </location>
</feature>
<feature type="strand" evidence="12">
    <location>
        <begin position="251"/>
        <end position="254"/>
    </location>
</feature>
<protein>
    <recommendedName>
        <fullName evidence="6">Low molecular mass lipoprotein 3</fullName>
        <shortName evidence="6">Bmlp3</shortName>
    </recommendedName>
    <alternativeName>
        <fullName evidence="5">30 KDa protein 1</fullName>
        <shortName evidence="5">Bm30K-1</shortName>
    </alternativeName>
    <alternativeName>
        <fullName evidence="4">30 KDa protein 19G1</fullName>
    </alternativeName>
</protein>
<name>LP3_BOMMO</name>
<proteinExistence type="evidence at protein level"/>
<evidence type="ECO:0000269" key="1">
    <source>
    </source>
</evidence>
<evidence type="ECO:0000269" key="2">
    <source>
    </source>
</evidence>
<evidence type="ECO:0000269" key="3">
    <source ref="5"/>
</evidence>
<evidence type="ECO:0000303" key="4">
    <source>
    </source>
</evidence>
<evidence type="ECO:0000303" key="5">
    <source>
    </source>
</evidence>
<evidence type="ECO:0000303" key="6">
    <source ref="5"/>
</evidence>
<evidence type="ECO:0000305" key="7"/>
<evidence type="ECO:0000312" key="8">
    <source>
        <dbReference type="EMBL" id="AFC87799.1"/>
    </source>
</evidence>
<evidence type="ECO:0007744" key="9">
    <source>
        <dbReference type="PDB" id="4IY8"/>
    </source>
</evidence>
<evidence type="ECO:0007744" key="10">
    <source>
        <dbReference type="PDB" id="4IY9"/>
    </source>
</evidence>
<evidence type="ECO:0007829" key="11">
    <source>
        <dbReference type="PDB" id="4IY8"/>
    </source>
</evidence>
<evidence type="ECO:0007829" key="12">
    <source>
        <dbReference type="PDB" id="4IY9"/>
    </source>
</evidence>
<keyword id="KW-0002">3D-structure</keyword>
<keyword id="KW-0903">Direct protein sequencing</keyword>
<keyword id="KW-0449">Lipoprotein</keyword>
<keyword id="KW-1185">Reference proteome</keyword>
<keyword id="KW-0964">Secreted</keyword>
<keyword id="KW-0732">Signal</keyword>
<accession>Q00802</accession>
<accession>H9J4F6</accession>
<organism>
    <name type="scientific">Bombyx mori</name>
    <name type="common">Silk moth</name>
    <dbReference type="NCBI Taxonomy" id="7091"/>
    <lineage>
        <taxon>Eukaryota</taxon>
        <taxon>Metazoa</taxon>
        <taxon>Ecdysozoa</taxon>
        <taxon>Arthropoda</taxon>
        <taxon>Hexapoda</taxon>
        <taxon>Insecta</taxon>
        <taxon>Pterygota</taxon>
        <taxon>Neoptera</taxon>
        <taxon>Endopterygota</taxon>
        <taxon>Lepidoptera</taxon>
        <taxon>Glossata</taxon>
        <taxon>Ditrysia</taxon>
        <taxon>Bombycoidea</taxon>
        <taxon>Bombycidae</taxon>
        <taxon>Bombycinae</taxon>
        <taxon>Bombyx</taxon>
    </lineage>
</organism>
<gene>
    <name evidence="6" type="primary">LP3</name>
</gene>
<dbReference type="EMBL" id="JN977519">
    <property type="protein sequence ID" value="AFC87799.1"/>
    <property type="molecule type" value="mRNA"/>
</dbReference>
<dbReference type="EMBL" id="X54736">
    <property type="protein sequence ID" value="CAA38533.1"/>
    <property type="molecule type" value="Genomic_DNA"/>
</dbReference>
<dbReference type="EMBL" id="BABH01021937">
    <property type="status" value="NOT_ANNOTATED_CDS"/>
    <property type="molecule type" value="Genomic_DNA"/>
</dbReference>
<dbReference type="PIR" id="S17662">
    <property type="entry name" value="S17662"/>
</dbReference>
<dbReference type="RefSeq" id="XP_012550498.1">
    <property type="nucleotide sequence ID" value="XM_012695044.4"/>
</dbReference>
<dbReference type="RefSeq" id="XP_012550504.1">
    <property type="nucleotide sequence ID" value="XM_012695050.4"/>
</dbReference>
<dbReference type="PDB" id="4IY8">
    <property type="method" value="X-ray"/>
    <property type="resolution" value="2.36 A"/>
    <property type="chains" value="A/B/C/D=18-256"/>
</dbReference>
<dbReference type="PDB" id="4IY9">
    <property type="method" value="X-ray"/>
    <property type="resolution" value="2.10 A"/>
    <property type="chains" value="A/B=18-256"/>
</dbReference>
<dbReference type="PDBsum" id="4IY8"/>
<dbReference type="PDBsum" id="4IY9"/>
<dbReference type="SMR" id="Q00802"/>
<dbReference type="PaxDb" id="7091-BGIBMGA004396-TA"/>
<dbReference type="EnsemblMetazoa" id="XM_012695044.3">
    <property type="protein sequence ID" value="XP_012550498.1"/>
    <property type="gene ID" value="GeneID_693044"/>
</dbReference>
<dbReference type="EnsemblMetazoa" id="XM_012695050.3">
    <property type="protein sequence ID" value="XP_012550504.1"/>
    <property type="gene ID" value="GeneID_693044"/>
</dbReference>
<dbReference type="GeneID" id="693044"/>
<dbReference type="CTD" id="693044"/>
<dbReference type="HOGENOM" id="CLU_053201_2_0_1"/>
<dbReference type="InParanoid" id="Q00802"/>
<dbReference type="OrthoDB" id="570492at7088"/>
<dbReference type="EvolutionaryTrace" id="Q00802"/>
<dbReference type="Proteomes" id="UP000005204">
    <property type="component" value="Unassembled WGS sequence"/>
</dbReference>
<dbReference type="GO" id="GO:0005576">
    <property type="term" value="C:extracellular region"/>
    <property type="evidence" value="ECO:0007669"/>
    <property type="project" value="UniProtKB-SubCell"/>
</dbReference>
<dbReference type="Gene3D" id="2.80.10.50">
    <property type="match status" value="1"/>
</dbReference>
<dbReference type="Gene3D" id="1.10.10.2400">
    <property type="entry name" value="Lepidopteran low molecular weight (30 kD) lipoprotein, N-terminal domain"/>
    <property type="match status" value="1"/>
</dbReference>
<dbReference type="InterPro" id="IPR004943">
    <property type="entry name" value="Lipoprotein_11"/>
</dbReference>
<dbReference type="InterPro" id="IPR042046">
    <property type="entry name" value="Lipoprotein_11_N"/>
</dbReference>
<dbReference type="Pfam" id="PF03260">
    <property type="entry name" value="Lipoprotein_11"/>
    <property type="match status" value="1"/>
</dbReference>
<sequence>MKPAIVILCLFVASLYAADSDVPNDILEEQLYNSVVVADYDSAVEKSKHLYEEKKSEVITNVVNKLIRNNKMNCMEYAYQLWLQGSKDIVRDCFPVEFRLIFAENAIKLMYKRDGLALTLSNDVQGDDGRPAYGDGKDKTSPRVSWKLIALWENNKVYFKILNTERNQYLVLGVGTNWNGDHMAFGVNSVDSFRAQWYLQPAKYDNDVLFYIYNREYSKALTLSRTVEPSGHRMAWGYNGRVIGSPEHYAWGIKAF</sequence>
<comment type="subcellular location">
    <subcellularLocation>
        <location evidence="1 2">Secreted</location>
    </subcellularLocation>
</comment>
<comment type="tissue specificity">
    <text evidence="1 2">Detected in larval hemolymph (at protein level).</text>
</comment>
<comment type="developmental stage">
    <text evidence="2 3">Expressed in fat body from the fifth larval instar through to the pupal stage (PubMed:26078299, Ref.5). Highest expression levels are found at the wandering stage which marks the transition from larva to pupa (Ref.5). Expression then declines during later pupal stages (Ref.5).</text>
</comment>
<comment type="miscellaneous">
    <text evidence="7">This lipoprotein belongs to the group of structurally related '30 kDa proteins' that comprise major protein components of the fifth (and last) instar larvae and of pupae.</text>
</comment>
<comment type="similarity">
    <text evidence="7">Belongs to the 30 kDa lipoprotein family.</text>
</comment>